<sequence>MKALWLENINESLVKDFYETQTEEEQNAGFEGVLSFGTAGIRSTFGLGPARLNAFTVRKVALGLAQYLNHNVDDASVVIHFDTRFLSKAFSQEMASVLANNGITAIISDNYKSTPELSFAVRHLQVNAGIMITASHNPKNYNGIKIYNEKGGQLLPEASEQLSEYINSIETPLNIEKGDFNAFVENGKIKYMSNEVTESYKKEVKSLVGSIDAHDAKVILTSLHGTSLPLVSDILTELDYHNFVIEKEQSEPNGNFPTVAIANPEDEAAFTLGKQLADKTDAQLIIATDPDADRLGFIERYGDNDFRYFNGNEIGLLLMKLRFQDLTEDSTPQYMIKSIVTSELAERLATSLNVEVNDVLTGFKFISDLIEHKQKDDDKQLLLAFEESHGYLAQPISRDKDAIQMVPLLVKYKNLLDKNGITFKETIEDIYENIGYFKDRTLAPTFEGKAGVKKIESIMSQFRNEQVFSICGMDVLKIEDYHVGEVRDMITGHTEKLTLPKTNLIRFIFENGFIALRPSGTEPKIKLYFSLEVENIDEITQQFEANYINNIV</sequence>
<feature type="chain" id="PRO_0000308348" description="Phosphoglucomutase">
    <location>
        <begin position="1"/>
        <end position="552"/>
    </location>
</feature>
<feature type="active site" description="Phosphoserine intermediate" evidence="1">
    <location>
        <position position="135"/>
    </location>
</feature>
<feature type="binding site" description="via phosphate group" evidence="1">
    <location>
        <position position="135"/>
    </location>
    <ligand>
        <name>Mg(2+)</name>
        <dbReference type="ChEBI" id="CHEBI:18420"/>
    </ligand>
</feature>
<feature type="binding site" evidence="1">
    <location>
        <position position="289"/>
    </location>
    <ligand>
        <name>Mg(2+)</name>
        <dbReference type="ChEBI" id="CHEBI:18420"/>
    </ligand>
</feature>
<feature type="binding site" evidence="1">
    <location>
        <position position="291"/>
    </location>
    <ligand>
        <name>Mg(2+)</name>
        <dbReference type="ChEBI" id="CHEBI:18420"/>
    </ligand>
</feature>
<feature type="binding site" evidence="1">
    <location>
        <position position="293"/>
    </location>
    <ligand>
        <name>Mg(2+)</name>
        <dbReference type="ChEBI" id="CHEBI:18420"/>
    </ligand>
</feature>
<name>PGCA_STAS1</name>
<organism>
    <name type="scientific">Staphylococcus saprophyticus subsp. saprophyticus (strain ATCC 15305 / DSM 20229 / NCIMB 8711 / NCTC 7292 / S-41)</name>
    <dbReference type="NCBI Taxonomy" id="342451"/>
    <lineage>
        <taxon>Bacteria</taxon>
        <taxon>Bacillati</taxon>
        <taxon>Bacillota</taxon>
        <taxon>Bacilli</taxon>
        <taxon>Bacillales</taxon>
        <taxon>Staphylococcaceae</taxon>
        <taxon>Staphylococcus</taxon>
    </lineage>
</organism>
<gene>
    <name type="primary">pgcA</name>
    <name type="ordered locus">SSP1737</name>
</gene>
<reference key="1">
    <citation type="journal article" date="2005" name="Proc. Natl. Acad. Sci. U.S.A.">
        <title>Whole genome sequence of Staphylococcus saprophyticus reveals the pathogenesis of uncomplicated urinary tract infection.</title>
        <authorList>
            <person name="Kuroda M."/>
            <person name="Yamashita A."/>
            <person name="Hirakawa H."/>
            <person name="Kumano M."/>
            <person name="Morikawa K."/>
            <person name="Higashide M."/>
            <person name="Maruyama A."/>
            <person name="Inose Y."/>
            <person name="Matoba K."/>
            <person name="Toh H."/>
            <person name="Kuhara S."/>
            <person name="Hattori M."/>
            <person name="Ohta T."/>
        </authorList>
    </citation>
    <scope>NUCLEOTIDE SEQUENCE [LARGE SCALE GENOMIC DNA]</scope>
    <source>
        <strain>ATCC 15305 / DSM 20229 / NCIMB 8711 / NCTC 7292 / S-41</strain>
    </source>
</reference>
<comment type="function">
    <text evidence="1">Catalyzes the interconversion between glucose-6-phosphate and alpha-glucose-1-phosphate. This is the first step in the biosynthesis of diglucosyl-diacylglycerol (Glc2-DAG), i.e. a glycolipid found in the membrane, which is also used as a membrane anchor for lipoteichoic acid (LTA) (By similarity).</text>
</comment>
<comment type="catalytic activity">
    <reaction>
        <text>alpha-D-glucose 1-phosphate = alpha-D-glucose 6-phosphate</text>
        <dbReference type="Rhea" id="RHEA:23536"/>
        <dbReference type="ChEBI" id="CHEBI:58225"/>
        <dbReference type="ChEBI" id="CHEBI:58601"/>
        <dbReference type="EC" id="5.4.2.2"/>
    </reaction>
</comment>
<comment type="cofactor">
    <cofactor evidence="1">
        <name>Mg(2+)</name>
        <dbReference type="ChEBI" id="CHEBI:18420"/>
    </cofactor>
    <text evidence="1">Binds 1 Mg(2+) ion per subunit.</text>
</comment>
<comment type="pathway">
    <text>Glycolipid metabolism; diglucosyl-diacylglycerol biosynthesis.</text>
</comment>
<comment type="similarity">
    <text evidence="2">Belongs to the phosphohexose mutase family.</text>
</comment>
<keyword id="KW-0119">Carbohydrate metabolism</keyword>
<keyword id="KW-0313">Glucose metabolism</keyword>
<keyword id="KW-0413">Isomerase</keyword>
<keyword id="KW-0460">Magnesium</keyword>
<keyword id="KW-0479">Metal-binding</keyword>
<keyword id="KW-0597">Phosphoprotein</keyword>
<keyword id="KW-1185">Reference proteome</keyword>
<accession>Q49WH7</accession>
<evidence type="ECO:0000250" key="1"/>
<evidence type="ECO:0000305" key="2"/>
<proteinExistence type="inferred from homology"/>
<protein>
    <recommendedName>
        <fullName>Phosphoglucomutase</fullName>
        <shortName>PGM</shortName>
        <ecNumber>5.4.2.2</ecNumber>
    </recommendedName>
    <alternativeName>
        <fullName>Alpha-phosphoglucomutase</fullName>
    </alternativeName>
    <alternativeName>
        <fullName>Glucose phosphomutase</fullName>
    </alternativeName>
</protein>
<dbReference type="EC" id="5.4.2.2"/>
<dbReference type="EMBL" id="AP008934">
    <property type="protein sequence ID" value="BAE18882.1"/>
    <property type="molecule type" value="Genomic_DNA"/>
</dbReference>
<dbReference type="RefSeq" id="WP_011303449.1">
    <property type="nucleotide sequence ID" value="NZ_MTGA01000039.1"/>
</dbReference>
<dbReference type="SMR" id="Q49WH7"/>
<dbReference type="GeneID" id="3616646"/>
<dbReference type="KEGG" id="ssp:SSP1737"/>
<dbReference type="PATRIC" id="fig|342451.11.peg.1735"/>
<dbReference type="eggNOG" id="COG1109">
    <property type="taxonomic scope" value="Bacteria"/>
</dbReference>
<dbReference type="HOGENOM" id="CLU_016950_0_0_9"/>
<dbReference type="OrthoDB" id="9806956at2"/>
<dbReference type="UniPathway" id="UPA00894"/>
<dbReference type="Proteomes" id="UP000006371">
    <property type="component" value="Chromosome"/>
</dbReference>
<dbReference type="GO" id="GO:0000287">
    <property type="term" value="F:magnesium ion binding"/>
    <property type="evidence" value="ECO:0007669"/>
    <property type="project" value="InterPro"/>
</dbReference>
<dbReference type="GO" id="GO:0004614">
    <property type="term" value="F:phosphoglucomutase activity"/>
    <property type="evidence" value="ECO:0007669"/>
    <property type="project" value="UniProtKB-EC"/>
</dbReference>
<dbReference type="GO" id="GO:0008973">
    <property type="term" value="F:phosphopentomutase activity"/>
    <property type="evidence" value="ECO:0007669"/>
    <property type="project" value="TreeGrafter"/>
</dbReference>
<dbReference type="GO" id="GO:0009246">
    <property type="term" value="P:enterobacterial common antigen biosynthetic process"/>
    <property type="evidence" value="ECO:0007669"/>
    <property type="project" value="UniProtKB-UniPathway"/>
</dbReference>
<dbReference type="GO" id="GO:0006006">
    <property type="term" value="P:glucose metabolic process"/>
    <property type="evidence" value="ECO:0007669"/>
    <property type="project" value="UniProtKB-KW"/>
</dbReference>
<dbReference type="GO" id="GO:0006166">
    <property type="term" value="P:purine ribonucleoside salvage"/>
    <property type="evidence" value="ECO:0007669"/>
    <property type="project" value="TreeGrafter"/>
</dbReference>
<dbReference type="CDD" id="cd05799">
    <property type="entry name" value="PGM2"/>
    <property type="match status" value="1"/>
</dbReference>
<dbReference type="Gene3D" id="3.40.120.10">
    <property type="entry name" value="Alpha-D-Glucose-1,6-Bisphosphate, subunit A, domain 3"/>
    <property type="match status" value="3"/>
</dbReference>
<dbReference type="Gene3D" id="3.30.310.50">
    <property type="entry name" value="Alpha-D-phosphohexomutase, C-terminal domain"/>
    <property type="match status" value="1"/>
</dbReference>
<dbReference type="InterPro" id="IPR005844">
    <property type="entry name" value="A-D-PHexomutase_a/b/a-I"/>
</dbReference>
<dbReference type="InterPro" id="IPR016055">
    <property type="entry name" value="A-D-PHexomutase_a/b/a-I/II/III"/>
</dbReference>
<dbReference type="InterPro" id="IPR005845">
    <property type="entry name" value="A-D-PHexomutase_a/b/a-II"/>
</dbReference>
<dbReference type="InterPro" id="IPR005846">
    <property type="entry name" value="A-D-PHexomutase_a/b/a-III"/>
</dbReference>
<dbReference type="InterPro" id="IPR005843">
    <property type="entry name" value="A-D-PHexomutase_C"/>
</dbReference>
<dbReference type="InterPro" id="IPR036900">
    <property type="entry name" value="A-D-PHexomutase_C_sf"/>
</dbReference>
<dbReference type="InterPro" id="IPR016066">
    <property type="entry name" value="A-D-PHexomutase_CS"/>
</dbReference>
<dbReference type="InterPro" id="IPR005841">
    <property type="entry name" value="Alpha-D-phosphohexomutase_SF"/>
</dbReference>
<dbReference type="PANTHER" id="PTHR45745:SF1">
    <property type="entry name" value="PHOSPHOGLUCOMUTASE 2B-RELATED"/>
    <property type="match status" value="1"/>
</dbReference>
<dbReference type="PANTHER" id="PTHR45745">
    <property type="entry name" value="PHOSPHOMANNOMUTASE 45A"/>
    <property type="match status" value="1"/>
</dbReference>
<dbReference type="Pfam" id="PF02878">
    <property type="entry name" value="PGM_PMM_I"/>
    <property type="match status" value="1"/>
</dbReference>
<dbReference type="Pfam" id="PF02879">
    <property type="entry name" value="PGM_PMM_II"/>
    <property type="match status" value="1"/>
</dbReference>
<dbReference type="Pfam" id="PF02880">
    <property type="entry name" value="PGM_PMM_III"/>
    <property type="match status" value="1"/>
</dbReference>
<dbReference type="Pfam" id="PF00408">
    <property type="entry name" value="PGM_PMM_IV"/>
    <property type="match status" value="1"/>
</dbReference>
<dbReference type="PRINTS" id="PR00509">
    <property type="entry name" value="PGMPMM"/>
</dbReference>
<dbReference type="SUPFAM" id="SSF55957">
    <property type="entry name" value="Phosphoglucomutase, C-terminal domain"/>
    <property type="match status" value="1"/>
</dbReference>
<dbReference type="SUPFAM" id="SSF53738">
    <property type="entry name" value="Phosphoglucomutase, first 3 domains"/>
    <property type="match status" value="3"/>
</dbReference>
<dbReference type="PROSITE" id="PS00710">
    <property type="entry name" value="PGM_PMM"/>
    <property type="match status" value="1"/>
</dbReference>